<proteinExistence type="inferred from homology"/>
<organism>
    <name type="scientific">Corynebacterium efficiens (strain DSM 44549 / YS-314 / AJ 12310 / JCM 11189 / NBRC 100395)</name>
    <dbReference type="NCBI Taxonomy" id="196164"/>
    <lineage>
        <taxon>Bacteria</taxon>
        <taxon>Bacillati</taxon>
        <taxon>Actinomycetota</taxon>
        <taxon>Actinomycetes</taxon>
        <taxon>Mycobacteriales</taxon>
        <taxon>Corynebacteriaceae</taxon>
        <taxon>Corynebacterium</taxon>
    </lineage>
</organism>
<protein>
    <recommendedName>
        <fullName evidence="1">Exodeoxyribonuclease 7 large subunit</fullName>
        <ecNumber evidence="1">3.1.11.6</ecNumber>
    </recommendedName>
    <alternativeName>
        <fullName evidence="1">Exodeoxyribonuclease VII large subunit</fullName>
        <shortName evidence="1">Exonuclease VII large subunit</shortName>
    </alternativeName>
</protein>
<dbReference type="EC" id="3.1.11.6" evidence="1"/>
<dbReference type="EMBL" id="BA000035">
    <property type="protein sequence ID" value="BAC17888.1"/>
    <property type="status" value="ALT_INIT"/>
    <property type="molecule type" value="Genomic_DNA"/>
</dbReference>
<dbReference type="RefSeq" id="WP_035109867.1">
    <property type="nucleotide sequence ID" value="NC_004369.1"/>
</dbReference>
<dbReference type="SMR" id="Q8FQP1"/>
<dbReference type="STRING" id="196164.gene:10741486"/>
<dbReference type="KEGG" id="cef:CE1078"/>
<dbReference type="eggNOG" id="COG1570">
    <property type="taxonomic scope" value="Bacteria"/>
</dbReference>
<dbReference type="HOGENOM" id="CLU_023625_2_1_11"/>
<dbReference type="OrthoDB" id="9802795at2"/>
<dbReference type="Proteomes" id="UP000001409">
    <property type="component" value="Chromosome"/>
</dbReference>
<dbReference type="GO" id="GO:0005737">
    <property type="term" value="C:cytoplasm"/>
    <property type="evidence" value="ECO:0007669"/>
    <property type="project" value="UniProtKB-SubCell"/>
</dbReference>
<dbReference type="GO" id="GO:0009318">
    <property type="term" value="C:exodeoxyribonuclease VII complex"/>
    <property type="evidence" value="ECO:0007669"/>
    <property type="project" value="InterPro"/>
</dbReference>
<dbReference type="GO" id="GO:0008855">
    <property type="term" value="F:exodeoxyribonuclease VII activity"/>
    <property type="evidence" value="ECO:0007669"/>
    <property type="project" value="UniProtKB-UniRule"/>
</dbReference>
<dbReference type="GO" id="GO:0003676">
    <property type="term" value="F:nucleic acid binding"/>
    <property type="evidence" value="ECO:0007669"/>
    <property type="project" value="InterPro"/>
</dbReference>
<dbReference type="GO" id="GO:0006308">
    <property type="term" value="P:DNA catabolic process"/>
    <property type="evidence" value="ECO:0007669"/>
    <property type="project" value="UniProtKB-UniRule"/>
</dbReference>
<dbReference type="CDD" id="cd04489">
    <property type="entry name" value="ExoVII_LU_OBF"/>
    <property type="match status" value="1"/>
</dbReference>
<dbReference type="HAMAP" id="MF_00378">
    <property type="entry name" value="Exonuc_7_L"/>
    <property type="match status" value="1"/>
</dbReference>
<dbReference type="InterPro" id="IPR003753">
    <property type="entry name" value="Exonuc_VII_L"/>
</dbReference>
<dbReference type="InterPro" id="IPR020579">
    <property type="entry name" value="Exonuc_VII_lsu_C"/>
</dbReference>
<dbReference type="InterPro" id="IPR025824">
    <property type="entry name" value="OB-fold_nuc-bd_dom"/>
</dbReference>
<dbReference type="NCBIfam" id="TIGR00237">
    <property type="entry name" value="xseA"/>
    <property type="match status" value="1"/>
</dbReference>
<dbReference type="PANTHER" id="PTHR30008">
    <property type="entry name" value="EXODEOXYRIBONUCLEASE 7 LARGE SUBUNIT"/>
    <property type="match status" value="1"/>
</dbReference>
<dbReference type="PANTHER" id="PTHR30008:SF0">
    <property type="entry name" value="EXODEOXYRIBONUCLEASE 7 LARGE SUBUNIT"/>
    <property type="match status" value="1"/>
</dbReference>
<dbReference type="Pfam" id="PF02601">
    <property type="entry name" value="Exonuc_VII_L"/>
    <property type="match status" value="2"/>
</dbReference>
<dbReference type="Pfam" id="PF13742">
    <property type="entry name" value="tRNA_anti_2"/>
    <property type="match status" value="1"/>
</dbReference>
<reference key="1">
    <citation type="journal article" date="2003" name="Genome Res.">
        <title>Comparative complete genome sequence analysis of the amino acid replacements responsible for the thermostability of Corynebacterium efficiens.</title>
        <authorList>
            <person name="Nishio Y."/>
            <person name="Nakamura Y."/>
            <person name="Kawarabayasi Y."/>
            <person name="Usuda Y."/>
            <person name="Kimura E."/>
            <person name="Sugimoto S."/>
            <person name="Matsui K."/>
            <person name="Yamagishi A."/>
            <person name="Kikuchi H."/>
            <person name="Ikeo K."/>
            <person name="Gojobori T."/>
        </authorList>
    </citation>
    <scope>NUCLEOTIDE SEQUENCE [LARGE SCALE GENOMIC DNA]</scope>
    <source>
        <strain>DSM 44549 / YS-314 / AJ 12310 / JCM 11189 / NBRC 100395</strain>
    </source>
</reference>
<evidence type="ECO:0000255" key="1">
    <source>
        <dbReference type="HAMAP-Rule" id="MF_00378"/>
    </source>
</evidence>
<evidence type="ECO:0000305" key="2"/>
<comment type="function">
    <text evidence="1">Bidirectionally degrades single-stranded DNA into large acid-insoluble oligonucleotides, which are then degraded further into small acid-soluble oligonucleotides.</text>
</comment>
<comment type="catalytic activity">
    <reaction evidence="1">
        <text>Exonucleolytic cleavage in either 5'- to 3'- or 3'- to 5'-direction to yield nucleoside 5'-phosphates.</text>
        <dbReference type="EC" id="3.1.11.6"/>
    </reaction>
</comment>
<comment type="subunit">
    <text evidence="1">Heterooligomer composed of large and small subunits.</text>
</comment>
<comment type="subcellular location">
    <subcellularLocation>
        <location evidence="1">Cytoplasm</location>
    </subcellularLocation>
</comment>
<comment type="similarity">
    <text evidence="1">Belongs to the XseA family.</text>
</comment>
<comment type="sequence caution" evidence="2">
    <conflict type="erroneous initiation">
        <sequence resource="EMBL-CDS" id="BAC17888"/>
    </conflict>
</comment>
<gene>
    <name evidence="1" type="primary">xseA</name>
    <name type="ordered locus">CE1078</name>
</gene>
<keyword id="KW-0963">Cytoplasm</keyword>
<keyword id="KW-0269">Exonuclease</keyword>
<keyword id="KW-0378">Hydrolase</keyword>
<keyword id="KW-0540">Nuclease</keyword>
<keyword id="KW-1185">Reference proteome</keyword>
<sequence>MPSAKSTPDTPWPVRDVNNQVKNWIERLGHLWVEGQLAQINVKPNWKLSYLTLRDVEQEVSVQLTCPTEIIRNRPTPLKDGDRVIVYGKPAFYAGRGSFSLWVTDIRPVGIGQLLARIEELRRQLAAEGLFDPARKKRLPFLPKCVGLITGRGSAAERDVLSVARDRWPEVQFKVINTAVQGASAVPEIIAALGELDQDPGVDVIIIARGGGSVEDLLPFSEEALQRAVAAAQTPVVSAIGHEPDTPILDNVADLRAATPTDAAKRVVPDVNEERLLIRQLRDRGAAALRGWVAREQQALASIRTRPVLADPMTPIVRRREEVERAVSLLRRDVNHMLRTEQSLVASLRAQVSALGPSATLARGYSVVQVVPRDGTPPQVVTTIEQTPPGSQLRIRVADGAITAAAMNTQKSD</sequence>
<name>EX7L_COREF</name>
<accession>Q8FQP1</accession>
<feature type="chain" id="PRO_0000197842" description="Exodeoxyribonuclease 7 large subunit">
    <location>
        <begin position="1"/>
        <end position="413"/>
    </location>
</feature>